<keyword id="KW-0138">CF(0)</keyword>
<keyword id="KW-0375">Hydrogen ion transport</keyword>
<keyword id="KW-0406">Ion transport</keyword>
<keyword id="KW-0472">Membrane</keyword>
<keyword id="KW-0496">Mitochondrion</keyword>
<keyword id="KW-0999">Mitochondrion inner membrane</keyword>
<keyword id="KW-1185">Reference proteome</keyword>
<keyword id="KW-0809">Transit peptide</keyword>
<keyword id="KW-0813">Transport</keyword>
<name>ATP5J_DROME</name>
<feature type="transit peptide" description="Mitochondrion" evidence="1">
    <location>
        <begin position="1"/>
        <end status="unknown"/>
    </location>
</feature>
<feature type="chain" id="PRO_0000002532" description="ATP synthase-coupling factor 6, mitochondrial">
    <location>
        <begin status="unknown"/>
        <end position="106"/>
    </location>
</feature>
<organism>
    <name type="scientific">Drosophila melanogaster</name>
    <name type="common">Fruit fly</name>
    <dbReference type="NCBI Taxonomy" id="7227"/>
    <lineage>
        <taxon>Eukaryota</taxon>
        <taxon>Metazoa</taxon>
        <taxon>Ecdysozoa</taxon>
        <taxon>Arthropoda</taxon>
        <taxon>Hexapoda</taxon>
        <taxon>Insecta</taxon>
        <taxon>Pterygota</taxon>
        <taxon>Neoptera</taxon>
        <taxon>Endopterygota</taxon>
        <taxon>Diptera</taxon>
        <taxon>Brachycera</taxon>
        <taxon>Muscomorpha</taxon>
        <taxon>Ephydroidea</taxon>
        <taxon>Drosophilidae</taxon>
        <taxon>Drosophila</taxon>
        <taxon>Sophophora</taxon>
    </lineage>
</organism>
<sequence>MLSQSLLSGMRVLRTEARRNFGIVAPALNKASDPIQQLFLDKVREYKQKSAGGKLVDSNPDIERELKTELDRVAKQFGSDGKTDMLKFPEFQFPDVKVDPITQAPQ</sequence>
<evidence type="ECO:0000255" key="1"/>
<evidence type="ECO:0000305" key="2"/>
<evidence type="ECO:0000312" key="3">
    <source>
        <dbReference type="FlyBase" id="FBgn0016119"/>
    </source>
</evidence>
<gene>
    <name evidence="3" type="primary">ATPsynCF6</name>
    <name evidence="3" type="ORF">CG4412</name>
</gene>
<protein>
    <recommendedName>
        <fullName>ATP synthase-coupling factor 6, mitochondrial</fullName>
        <shortName>ATPase subunit F6</shortName>
    </recommendedName>
</protein>
<reference key="1">
    <citation type="journal article" date="1999" name="Mol. Gen. Genet.">
        <title>Identification of nuclear genes encoding mitochondrial proteins: isolation of a collection of D. melanogaster cDNAs homologous to sequences in the Human Gene Index database.</title>
        <authorList>
            <person name="Caggese C."/>
            <person name="Ragone G."/>
            <person name="Perrini B."/>
            <person name="Moschetti R."/>
            <person name="de Pinto V."/>
            <person name="Caizzi R."/>
            <person name="Barsanti P."/>
        </authorList>
    </citation>
    <scope>NUCLEOTIDE SEQUENCE [MRNA]</scope>
    <source>
        <tissue>Ovary</tissue>
    </source>
</reference>
<reference key="2">
    <citation type="journal article" date="2000" name="Science">
        <title>The genome sequence of Drosophila melanogaster.</title>
        <authorList>
            <person name="Adams M.D."/>
            <person name="Celniker S.E."/>
            <person name="Holt R.A."/>
            <person name="Evans C.A."/>
            <person name="Gocayne J.D."/>
            <person name="Amanatides P.G."/>
            <person name="Scherer S.E."/>
            <person name="Li P.W."/>
            <person name="Hoskins R.A."/>
            <person name="Galle R.F."/>
            <person name="George R.A."/>
            <person name="Lewis S.E."/>
            <person name="Richards S."/>
            <person name="Ashburner M."/>
            <person name="Henderson S.N."/>
            <person name="Sutton G.G."/>
            <person name="Wortman J.R."/>
            <person name="Yandell M.D."/>
            <person name="Zhang Q."/>
            <person name="Chen L.X."/>
            <person name="Brandon R.C."/>
            <person name="Rogers Y.-H.C."/>
            <person name="Blazej R.G."/>
            <person name="Champe M."/>
            <person name="Pfeiffer B.D."/>
            <person name="Wan K.H."/>
            <person name="Doyle C."/>
            <person name="Baxter E.G."/>
            <person name="Helt G."/>
            <person name="Nelson C.R."/>
            <person name="Miklos G.L.G."/>
            <person name="Abril J.F."/>
            <person name="Agbayani A."/>
            <person name="An H.-J."/>
            <person name="Andrews-Pfannkoch C."/>
            <person name="Baldwin D."/>
            <person name="Ballew R.M."/>
            <person name="Basu A."/>
            <person name="Baxendale J."/>
            <person name="Bayraktaroglu L."/>
            <person name="Beasley E.M."/>
            <person name="Beeson K.Y."/>
            <person name="Benos P.V."/>
            <person name="Berman B.P."/>
            <person name="Bhandari D."/>
            <person name="Bolshakov S."/>
            <person name="Borkova D."/>
            <person name="Botchan M.R."/>
            <person name="Bouck J."/>
            <person name="Brokstein P."/>
            <person name="Brottier P."/>
            <person name="Burtis K.C."/>
            <person name="Busam D.A."/>
            <person name="Butler H."/>
            <person name="Cadieu E."/>
            <person name="Center A."/>
            <person name="Chandra I."/>
            <person name="Cherry J.M."/>
            <person name="Cawley S."/>
            <person name="Dahlke C."/>
            <person name="Davenport L.B."/>
            <person name="Davies P."/>
            <person name="de Pablos B."/>
            <person name="Delcher A."/>
            <person name="Deng Z."/>
            <person name="Mays A.D."/>
            <person name="Dew I."/>
            <person name="Dietz S.M."/>
            <person name="Dodson K."/>
            <person name="Doup L.E."/>
            <person name="Downes M."/>
            <person name="Dugan-Rocha S."/>
            <person name="Dunkov B.C."/>
            <person name="Dunn P."/>
            <person name="Durbin K.J."/>
            <person name="Evangelista C.C."/>
            <person name="Ferraz C."/>
            <person name="Ferriera S."/>
            <person name="Fleischmann W."/>
            <person name="Fosler C."/>
            <person name="Gabrielian A.E."/>
            <person name="Garg N.S."/>
            <person name="Gelbart W.M."/>
            <person name="Glasser K."/>
            <person name="Glodek A."/>
            <person name="Gong F."/>
            <person name="Gorrell J.H."/>
            <person name="Gu Z."/>
            <person name="Guan P."/>
            <person name="Harris M."/>
            <person name="Harris N.L."/>
            <person name="Harvey D.A."/>
            <person name="Heiman T.J."/>
            <person name="Hernandez J.R."/>
            <person name="Houck J."/>
            <person name="Hostin D."/>
            <person name="Houston K.A."/>
            <person name="Howland T.J."/>
            <person name="Wei M.-H."/>
            <person name="Ibegwam C."/>
            <person name="Jalali M."/>
            <person name="Kalush F."/>
            <person name="Karpen G.H."/>
            <person name="Ke Z."/>
            <person name="Kennison J.A."/>
            <person name="Ketchum K.A."/>
            <person name="Kimmel B.E."/>
            <person name="Kodira C.D."/>
            <person name="Kraft C.L."/>
            <person name="Kravitz S."/>
            <person name="Kulp D."/>
            <person name="Lai Z."/>
            <person name="Lasko P."/>
            <person name="Lei Y."/>
            <person name="Levitsky A.A."/>
            <person name="Li J.H."/>
            <person name="Li Z."/>
            <person name="Liang Y."/>
            <person name="Lin X."/>
            <person name="Liu X."/>
            <person name="Mattei B."/>
            <person name="McIntosh T.C."/>
            <person name="McLeod M.P."/>
            <person name="McPherson D."/>
            <person name="Merkulov G."/>
            <person name="Milshina N.V."/>
            <person name="Mobarry C."/>
            <person name="Morris J."/>
            <person name="Moshrefi A."/>
            <person name="Mount S.M."/>
            <person name="Moy M."/>
            <person name="Murphy B."/>
            <person name="Murphy L."/>
            <person name="Muzny D.M."/>
            <person name="Nelson D.L."/>
            <person name="Nelson D.R."/>
            <person name="Nelson K.A."/>
            <person name="Nixon K."/>
            <person name="Nusskern D.R."/>
            <person name="Pacleb J.M."/>
            <person name="Palazzolo M."/>
            <person name="Pittman G.S."/>
            <person name="Pan S."/>
            <person name="Pollard J."/>
            <person name="Puri V."/>
            <person name="Reese M.G."/>
            <person name="Reinert K."/>
            <person name="Remington K."/>
            <person name="Saunders R.D.C."/>
            <person name="Scheeler F."/>
            <person name="Shen H."/>
            <person name="Shue B.C."/>
            <person name="Siden-Kiamos I."/>
            <person name="Simpson M."/>
            <person name="Skupski M.P."/>
            <person name="Smith T.J."/>
            <person name="Spier E."/>
            <person name="Spradling A.C."/>
            <person name="Stapleton M."/>
            <person name="Strong R."/>
            <person name="Sun E."/>
            <person name="Svirskas R."/>
            <person name="Tector C."/>
            <person name="Turner R."/>
            <person name="Venter E."/>
            <person name="Wang A.H."/>
            <person name="Wang X."/>
            <person name="Wang Z.-Y."/>
            <person name="Wassarman D.A."/>
            <person name="Weinstock G.M."/>
            <person name="Weissenbach J."/>
            <person name="Williams S.M."/>
            <person name="Woodage T."/>
            <person name="Worley K.C."/>
            <person name="Wu D."/>
            <person name="Yang S."/>
            <person name="Yao Q.A."/>
            <person name="Ye J."/>
            <person name="Yeh R.-F."/>
            <person name="Zaveri J.S."/>
            <person name="Zhan M."/>
            <person name="Zhang G."/>
            <person name="Zhao Q."/>
            <person name="Zheng L."/>
            <person name="Zheng X.H."/>
            <person name="Zhong F.N."/>
            <person name="Zhong W."/>
            <person name="Zhou X."/>
            <person name="Zhu S.C."/>
            <person name="Zhu X."/>
            <person name="Smith H.O."/>
            <person name="Gibbs R.A."/>
            <person name="Myers E.W."/>
            <person name="Rubin G.M."/>
            <person name="Venter J.C."/>
        </authorList>
    </citation>
    <scope>NUCLEOTIDE SEQUENCE [LARGE SCALE GENOMIC DNA]</scope>
    <source>
        <strain>Berkeley</strain>
    </source>
</reference>
<reference key="3">
    <citation type="journal article" date="2002" name="Genome Biol.">
        <title>Annotation of the Drosophila melanogaster euchromatic genome: a systematic review.</title>
        <authorList>
            <person name="Misra S."/>
            <person name="Crosby M.A."/>
            <person name="Mungall C.J."/>
            <person name="Matthews B.B."/>
            <person name="Campbell K.S."/>
            <person name="Hradecky P."/>
            <person name="Huang Y."/>
            <person name="Kaminker J.S."/>
            <person name="Millburn G.H."/>
            <person name="Prochnik S.E."/>
            <person name="Smith C.D."/>
            <person name="Tupy J.L."/>
            <person name="Whitfield E.J."/>
            <person name="Bayraktaroglu L."/>
            <person name="Berman B.P."/>
            <person name="Bettencourt B.R."/>
            <person name="Celniker S.E."/>
            <person name="de Grey A.D.N.J."/>
            <person name="Drysdale R.A."/>
            <person name="Harris N.L."/>
            <person name="Richter J."/>
            <person name="Russo S."/>
            <person name="Schroeder A.J."/>
            <person name="Shu S.Q."/>
            <person name="Stapleton M."/>
            <person name="Yamada C."/>
            <person name="Ashburner M."/>
            <person name="Gelbart W.M."/>
            <person name="Rubin G.M."/>
            <person name="Lewis S.E."/>
        </authorList>
    </citation>
    <scope>GENOME REANNOTATION</scope>
    <source>
        <strain>Berkeley</strain>
    </source>
</reference>
<reference key="4">
    <citation type="journal article" date="2002" name="Genome Biol.">
        <title>A Drosophila full-length cDNA resource.</title>
        <authorList>
            <person name="Stapleton M."/>
            <person name="Carlson J.W."/>
            <person name="Brokstein P."/>
            <person name="Yu C."/>
            <person name="Champe M."/>
            <person name="George R.A."/>
            <person name="Guarin H."/>
            <person name="Kronmiller B."/>
            <person name="Pacleb J.M."/>
            <person name="Park S."/>
            <person name="Wan K.H."/>
            <person name="Rubin G.M."/>
            <person name="Celniker S.E."/>
        </authorList>
    </citation>
    <scope>NUCLEOTIDE SEQUENCE [LARGE SCALE MRNA]</scope>
    <source>
        <strain>Berkeley</strain>
        <tissue>Head</tissue>
    </source>
</reference>
<proteinExistence type="inferred from homology"/>
<dbReference type="EMBL" id="X99665">
    <property type="protein sequence ID" value="CAA67979.1"/>
    <property type="molecule type" value="mRNA"/>
</dbReference>
<dbReference type="EMBL" id="AE014297">
    <property type="protein sequence ID" value="AAF56127.1"/>
    <property type="molecule type" value="Genomic_DNA"/>
</dbReference>
<dbReference type="EMBL" id="BT001763">
    <property type="protein sequence ID" value="AAN71518.1"/>
    <property type="molecule type" value="mRNA"/>
</dbReference>
<dbReference type="RefSeq" id="NP_001247264.1">
    <property type="nucleotide sequence ID" value="NM_001260335.1"/>
</dbReference>
<dbReference type="RefSeq" id="NP_001262873.1">
    <property type="nucleotide sequence ID" value="NM_001275944.1"/>
</dbReference>
<dbReference type="RefSeq" id="NP_477194.1">
    <property type="nucleotide sequence ID" value="NM_057846.5"/>
</dbReference>
<dbReference type="SMR" id="Q24407"/>
<dbReference type="BioGRID" id="67702">
    <property type="interactions" value="58"/>
</dbReference>
<dbReference type="ComplexPortal" id="CPX-8618">
    <property type="entry name" value="Mitochondrial proton-transporting ATP synthase complex"/>
</dbReference>
<dbReference type="DIP" id="DIP-22705N"/>
<dbReference type="FunCoup" id="Q24407">
    <property type="interactions" value="1448"/>
</dbReference>
<dbReference type="IntAct" id="Q24407">
    <property type="interactions" value="81"/>
</dbReference>
<dbReference type="STRING" id="7227.FBpp0297124"/>
<dbReference type="PaxDb" id="7227-FBpp0305911"/>
<dbReference type="DNASU" id="42759"/>
<dbReference type="EnsemblMetazoa" id="FBtr0084432">
    <property type="protein sequence ID" value="FBpp0083824"/>
    <property type="gene ID" value="FBgn0016119"/>
</dbReference>
<dbReference type="EnsemblMetazoa" id="FBtr0305982">
    <property type="protein sequence ID" value="FBpp0297124"/>
    <property type="gene ID" value="FBgn0016119"/>
</dbReference>
<dbReference type="EnsemblMetazoa" id="FBtr0333777">
    <property type="protein sequence ID" value="FBpp0305911"/>
    <property type="gene ID" value="FBgn0016119"/>
</dbReference>
<dbReference type="GeneID" id="42759"/>
<dbReference type="KEGG" id="dme:Dmel_CG4412"/>
<dbReference type="AGR" id="FB:FBgn0016119"/>
<dbReference type="CTD" id="42759"/>
<dbReference type="FlyBase" id="FBgn0016119">
    <property type="gene designation" value="ATPsynCF6"/>
</dbReference>
<dbReference type="VEuPathDB" id="VectorBase:FBgn0016119"/>
<dbReference type="eggNOG" id="KOG4634">
    <property type="taxonomic scope" value="Eukaryota"/>
</dbReference>
<dbReference type="GeneTree" id="ENSGT00390000008902"/>
<dbReference type="HOGENOM" id="CLU_145649_0_0_1"/>
<dbReference type="InParanoid" id="Q24407"/>
<dbReference type="OMA" id="MTKFPTF"/>
<dbReference type="OrthoDB" id="8902296at2759"/>
<dbReference type="PhylomeDB" id="Q24407"/>
<dbReference type="Reactome" id="R-DME-163210">
    <property type="pathway name" value="Formation of ATP by chemiosmotic coupling"/>
</dbReference>
<dbReference type="Reactome" id="R-DME-8949613">
    <property type="pathway name" value="Cristae formation"/>
</dbReference>
<dbReference type="Reactome" id="R-DME-9837999">
    <property type="pathway name" value="Mitochondrial protein degradation"/>
</dbReference>
<dbReference type="SignaLink" id="Q24407"/>
<dbReference type="BioGRID-ORCS" id="42759">
    <property type="hits" value="0 hits in 1 CRISPR screen"/>
</dbReference>
<dbReference type="ChiTaRS" id="ATPsynCF6">
    <property type="organism name" value="fly"/>
</dbReference>
<dbReference type="GenomeRNAi" id="42759"/>
<dbReference type="PRO" id="PR:Q24407"/>
<dbReference type="Proteomes" id="UP000000803">
    <property type="component" value="Chromosome 3R"/>
</dbReference>
<dbReference type="Bgee" id="FBgn0016119">
    <property type="expression patterns" value="Expressed in adult hindgut (Drosophila) and 281 other cell types or tissues"/>
</dbReference>
<dbReference type="ExpressionAtlas" id="Q24407">
    <property type="expression patterns" value="baseline and differential"/>
</dbReference>
<dbReference type="GO" id="GO:0005743">
    <property type="term" value="C:mitochondrial inner membrane"/>
    <property type="evidence" value="ECO:0000305"/>
    <property type="project" value="FlyBase"/>
</dbReference>
<dbReference type="GO" id="GO:0005739">
    <property type="term" value="C:mitochondrion"/>
    <property type="evidence" value="ECO:0007005"/>
    <property type="project" value="FlyBase"/>
</dbReference>
<dbReference type="GO" id="GO:0045259">
    <property type="term" value="C:proton-transporting ATP synthase complex"/>
    <property type="evidence" value="ECO:0000250"/>
    <property type="project" value="FlyBase"/>
</dbReference>
<dbReference type="GO" id="GO:0015078">
    <property type="term" value="F:proton transmembrane transporter activity"/>
    <property type="evidence" value="ECO:0007669"/>
    <property type="project" value="InterPro"/>
</dbReference>
<dbReference type="GO" id="GO:0015986">
    <property type="term" value="P:proton motive force-driven ATP synthesis"/>
    <property type="evidence" value="ECO:0007669"/>
    <property type="project" value="InterPro"/>
</dbReference>
<dbReference type="GO" id="GO:1902600">
    <property type="term" value="P:proton transmembrane transport"/>
    <property type="evidence" value="ECO:0000250"/>
    <property type="project" value="FlyBase"/>
</dbReference>
<dbReference type="FunFam" id="1.10.246.110:FF:000001">
    <property type="entry name" value="ATP synthase-coupling factor 6, mitochondrial"/>
    <property type="match status" value="1"/>
</dbReference>
<dbReference type="Gene3D" id="1.10.246.110">
    <property type="entry name" value="Mitochondrial ATP synthase-coupling factor 6"/>
    <property type="match status" value="1"/>
</dbReference>
<dbReference type="InterPro" id="IPR008387">
    <property type="entry name" value="ATP_synth_f6_mt"/>
</dbReference>
<dbReference type="InterPro" id="IPR036204">
    <property type="entry name" value="ATP_synth_f6_sf_mt"/>
</dbReference>
<dbReference type="PANTHER" id="PTHR12441">
    <property type="entry name" value="ATP SYNTHASE COUPLING FACTOR 6, MITOCHONDRIAL"/>
    <property type="match status" value="1"/>
</dbReference>
<dbReference type="PANTHER" id="PTHR12441:SF10">
    <property type="entry name" value="ATP SYNTHASE-COUPLING FACTOR 6, MITOCHONDRIAL"/>
    <property type="match status" value="1"/>
</dbReference>
<dbReference type="Pfam" id="PF05511">
    <property type="entry name" value="ATP-synt_F6"/>
    <property type="match status" value="1"/>
</dbReference>
<dbReference type="PIRSF" id="PIRSF002455">
    <property type="entry name" value="ATP_synthase_coupling_factor_6"/>
    <property type="match status" value="1"/>
</dbReference>
<dbReference type="SUPFAM" id="SSF111357">
    <property type="entry name" value="Mitochondrial ATP synthase coupling factor 6"/>
    <property type="match status" value="1"/>
</dbReference>
<accession>Q24407</accession>
<accession>Q9VCN0</accession>
<comment type="function">
    <text>Mitochondrial membrane ATP synthase (F(1)F(0) ATP synthase or Complex V) produces ATP from ADP in the presence of a proton gradient across the membrane which is generated by electron transport complexes of the respiratory chain. F-type ATPases consist of two structural domains, F(1) - containing the extramembraneous catalytic core and F(0) - containing the membrane proton channel, linked together by a central stalk and a peripheral stalk. During catalysis, ATP synthesis in the catalytic domain of F(1) is coupled via a rotary mechanism of the central stalk subunits to proton translocation. Part of the complex F(0) domain and the peripheric stalk, which acts as a stator to hold the catalytic alpha(3)beta(3) subcomplex and subunit a/ATP6 static relative to the rotary elements.</text>
</comment>
<comment type="subunit">
    <text>F-type ATPases have 2 components, CF(1) - the catalytic core - and CF(0) - the membrane proton channel. CF(0) seems to have nine subunits: a, b, c, d, e, f, g, F6 and 8 (or A6L).</text>
</comment>
<comment type="subcellular location">
    <subcellularLocation>
        <location>Mitochondrion</location>
    </subcellularLocation>
    <subcellularLocation>
        <location>Mitochondrion inner membrane</location>
    </subcellularLocation>
</comment>
<comment type="similarity">
    <text evidence="2">Belongs to the eukaryotic ATPase subunit F6 family.</text>
</comment>